<evidence type="ECO:0000255" key="1">
    <source>
        <dbReference type="HAMAP-Rule" id="MF_00297"/>
    </source>
</evidence>
<proteinExistence type="inferred from homology"/>
<organism>
    <name type="scientific">Haemophilus influenzae (strain 86-028NP)</name>
    <dbReference type="NCBI Taxonomy" id="281310"/>
    <lineage>
        <taxon>Bacteria</taxon>
        <taxon>Pseudomonadati</taxon>
        <taxon>Pseudomonadota</taxon>
        <taxon>Gammaproteobacteria</taxon>
        <taxon>Pasteurellales</taxon>
        <taxon>Pasteurellaceae</taxon>
        <taxon>Haemophilus</taxon>
    </lineage>
</organism>
<reference key="1">
    <citation type="journal article" date="2005" name="J. Bacteriol.">
        <title>Genomic sequence of an otitis media isolate of nontypeable Haemophilus influenzae: comparative study with H. influenzae serotype d, strain KW20.</title>
        <authorList>
            <person name="Harrison A."/>
            <person name="Dyer D.W."/>
            <person name="Gillaspy A."/>
            <person name="Ray W.C."/>
            <person name="Mungur R."/>
            <person name="Carson M.B."/>
            <person name="Zhong H."/>
            <person name="Gipson J."/>
            <person name="Gipson M."/>
            <person name="Johnson L.S."/>
            <person name="Lewis L."/>
            <person name="Bakaletz L.O."/>
            <person name="Munson R.S. Jr."/>
        </authorList>
    </citation>
    <scope>NUCLEOTIDE SEQUENCE [LARGE SCALE GENOMIC DNA]</scope>
    <source>
        <strain>86-028NP</strain>
    </source>
</reference>
<sequence length="264" mass="30206">MKILQQDDFGYWLLTQGSNLYLVNNELPFGIAKDIDLEGLQAMQIGEWKNHPLWLVAEQESDEREYVSLRNLLSLPEDEFHILSRGVEINHFLKTHKFCGKCGHKTQQTQDELAVQCIHCGYQTYPVICPSIIVAVRRGHEILLANHKRHYSPNGGIYTTLAGFVEVGETFEQAVQREVFEETGISIKNLRYFGSQPWAFPNSQMVGFLADYESGEITLQESEIHDAQWFSYDQPLPELPPTGTIARKLIHVTLELCKAEHKCD</sequence>
<feature type="chain" id="PRO_0000232116" description="NAD-capped RNA hydrolase NudC">
    <location>
        <begin position="1"/>
        <end position="264"/>
    </location>
</feature>
<feature type="domain" description="Nudix hydrolase" evidence="1">
    <location>
        <begin position="126"/>
        <end position="253"/>
    </location>
</feature>
<feature type="short sequence motif" description="Nudix box" evidence="1">
    <location>
        <begin position="163"/>
        <end position="184"/>
    </location>
</feature>
<feature type="binding site" evidence="1">
    <location>
        <position position="70"/>
    </location>
    <ligand>
        <name>substrate</name>
    </ligand>
</feature>
<feature type="binding site" evidence="1">
    <location>
        <position position="99"/>
    </location>
    <ligand>
        <name>Zn(2+)</name>
        <dbReference type="ChEBI" id="CHEBI:29105"/>
    </ligand>
</feature>
<feature type="binding site" evidence="1">
    <location>
        <position position="102"/>
    </location>
    <ligand>
        <name>Zn(2+)</name>
        <dbReference type="ChEBI" id="CHEBI:29105"/>
    </ligand>
</feature>
<feature type="binding site" evidence="1">
    <location>
        <position position="112"/>
    </location>
    <ligand>
        <name>substrate</name>
    </ligand>
</feature>
<feature type="binding site" evidence="1">
    <location>
        <position position="117"/>
    </location>
    <ligand>
        <name>Zn(2+)</name>
        <dbReference type="ChEBI" id="CHEBI:29105"/>
    </ligand>
</feature>
<feature type="binding site" evidence="1">
    <location>
        <position position="120"/>
    </location>
    <ligand>
        <name>Zn(2+)</name>
        <dbReference type="ChEBI" id="CHEBI:29105"/>
    </ligand>
</feature>
<feature type="binding site" evidence="1">
    <location>
        <position position="125"/>
    </location>
    <ligand>
        <name>substrate</name>
    </ligand>
</feature>
<feature type="binding site" evidence="1">
    <location>
        <position position="162"/>
    </location>
    <ligand>
        <name>a divalent metal cation</name>
        <dbReference type="ChEBI" id="CHEBI:60240"/>
        <label>1</label>
    </ligand>
</feature>
<feature type="binding site" evidence="1">
    <location>
        <position position="178"/>
    </location>
    <ligand>
        <name>a divalent metal cation</name>
        <dbReference type="ChEBI" id="CHEBI:60240"/>
        <label>2</label>
    </ligand>
</feature>
<feature type="binding site" evidence="1">
    <location>
        <position position="178"/>
    </location>
    <ligand>
        <name>a divalent metal cation</name>
        <dbReference type="ChEBI" id="CHEBI:60240"/>
        <label>3</label>
    </ligand>
</feature>
<feature type="binding site" evidence="1">
    <location>
        <position position="182"/>
    </location>
    <ligand>
        <name>a divalent metal cation</name>
        <dbReference type="ChEBI" id="CHEBI:60240"/>
        <label>1</label>
    </ligand>
</feature>
<feature type="binding site" evidence="1">
    <location>
        <position position="182"/>
    </location>
    <ligand>
        <name>a divalent metal cation</name>
        <dbReference type="ChEBI" id="CHEBI:60240"/>
        <label>3</label>
    </ligand>
</feature>
<feature type="binding site" evidence="1">
    <location>
        <begin position="196"/>
        <end position="203"/>
    </location>
    <ligand>
        <name>substrate</name>
    </ligand>
</feature>
<feature type="binding site" evidence="1">
    <location>
        <position position="223"/>
    </location>
    <ligand>
        <name>a divalent metal cation</name>
        <dbReference type="ChEBI" id="CHEBI:60240"/>
        <label>1</label>
    </ligand>
</feature>
<feature type="binding site" evidence="1">
    <location>
        <position position="223"/>
    </location>
    <ligand>
        <name>a divalent metal cation</name>
        <dbReference type="ChEBI" id="CHEBI:60240"/>
        <label>3</label>
    </ligand>
</feature>
<feature type="binding site" evidence="1">
    <location>
        <position position="246"/>
    </location>
    <ligand>
        <name>substrate</name>
    </ligand>
</feature>
<protein>
    <recommendedName>
        <fullName evidence="1">NAD-capped RNA hydrolase NudC</fullName>
        <shortName evidence="1">DeNADding enzyme NudC</shortName>
        <ecNumber evidence="1">3.6.1.-</ecNumber>
    </recommendedName>
    <alternativeName>
        <fullName evidence="1">NADH pyrophosphatase</fullName>
        <ecNumber evidence="1">3.6.1.22</ecNumber>
    </alternativeName>
</protein>
<accession>Q4QNB3</accession>
<gene>
    <name evidence="1" type="primary">nudC</name>
    <name type="ordered locus">NTHI0557</name>
</gene>
<comment type="function">
    <text evidence="1">mRNA decapping enzyme that specifically removes the nicotinamide adenine dinucleotide (NAD) cap from a subset of mRNAs by hydrolyzing the diphosphate linkage to produce nicotinamide mononucleotide (NMN) and 5' monophosphate mRNA. The NAD-cap is present at the 5'-end of some mRNAs and stabilizes RNA against 5'-processing. Has preference for mRNAs with a 5'-end purine. Catalyzes the hydrolysis of a broad range of dinucleotide pyrophosphates.</text>
</comment>
<comment type="catalytic activity">
    <reaction evidence="1">
        <text>a 5'-end NAD(+)-phospho-ribonucleoside in mRNA + H2O = a 5'-end phospho-adenosine-phospho-ribonucleoside in mRNA + beta-nicotinamide D-ribonucleotide + 2 H(+)</text>
        <dbReference type="Rhea" id="RHEA:60876"/>
        <dbReference type="Rhea" id="RHEA-COMP:15698"/>
        <dbReference type="Rhea" id="RHEA-COMP:15719"/>
        <dbReference type="ChEBI" id="CHEBI:14649"/>
        <dbReference type="ChEBI" id="CHEBI:15377"/>
        <dbReference type="ChEBI" id="CHEBI:15378"/>
        <dbReference type="ChEBI" id="CHEBI:144029"/>
        <dbReference type="ChEBI" id="CHEBI:144051"/>
    </reaction>
    <physiologicalReaction direction="left-to-right" evidence="1">
        <dbReference type="Rhea" id="RHEA:60877"/>
    </physiologicalReaction>
</comment>
<comment type="catalytic activity">
    <reaction evidence="1">
        <text>NAD(+) + H2O = beta-nicotinamide D-ribonucleotide + AMP + 2 H(+)</text>
        <dbReference type="Rhea" id="RHEA:11800"/>
        <dbReference type="ChEBI" id="CHEBI:14649"/>
        <dbReference type="ChEBI" id="CHEBI:15377"/>
        <dbReference type="ChEBI" id="CHEBI:15378"/>
        <dbReference type="ChEBI" id="CHEBI:57540"/>
        <dbReference type="ChEBI" id="CHEBI:456215"/>
        <dbReference type="EC" id="3.6.1.22"/>
    </reaction>
</comment>
<comment type="catalytic activity">
    <reaction evidence="1">
        <text>NADH + H2O = reduced beta-nicotinamide D-ribonucleotide + AMP + 2 H(+)</text>
        <dbReference type="Rhea" id="RHEA:48868"/>
        <dbReference type="ChEBI" id="CHEBI:15377"/>
        <dbReference type="ChEBI" id="CHEBI:15378"/>
        <dbReference type="ChEBI" id="CHEBI:57945"/>
        <dbReference type="ChEBI" id="CHEBI:90832"/>
        <dbReference type="ChEBI" id="CHEBI:456215"/>
        <dbReference type="EC" id="3.6.1.22"/>
    </reaction>
</comment>
<comment type="cofactor">
    <cofactor evidence="1">
        <name>Mg(2+)</name>
        <dbReference type="ChEBI" id="CHEBI:18420"/>
    </cofactor>
    <cofactor evidence="1">
        <name>Mn(2+)</name>
        <dbReference type="ChEBI" id="CHEBI:29035"/>
    </cofactor>
    <text evidence="1">Divalent metal cations. Mg(2+) or Mn(2+).</text>
</comment>
<comment type="cofactor">
    <cofactor evidence="1">
        <name>Zn(2+)</name>
        <dbReference type="ChEBI" id="CHEBI:29105"/>
    </cofactor>
    <text evidence="1">Binds 1 zinc ion per subunit.</text>
</comment>
<comment type="subunit">
    <text evidence="1">Homodimer.</text>
</comment>
<comment type="similarity">
    <text evidence="1">Belongs to the Nudix hydrolase family. NudC subfamily.</text>
</comment>
<dbReference type="EC" id="3.6.1.-" evidence="1"/>
<dbReference type="EC" id="3.6.1.22" evidence="1"/>
<dbReference type="EMBL" id="CP000057">
    <property type="protein sequence ID" value="AAX87484.1"/>
    <property type="molecule type" value="Genomic_DNA"/>
</dbReference>
<dbReference type="RefSeq" id="WP_005686893.1">
    <property type="nucleotide sequence ID" value="NC_007146.2"/>
</dbReference>
<dbReference type="SMR" id="Q4QNB3"/>
<dbReference type="GeneID" id="93219445"/>
<dbReference type="KEGG" id="hit:NTHI0557"/>
<dbReference type="HOGENOM" id="CLU_037162_0_1_6"/>
<dbReference type="Proteomes" id="UP000002525">
    <property type="component" value="Chromosome"/>
</dbReference>
<dbReference type="GO" id="GO:0005829">
    <property type="term" value="C:cytosol"/>
    <property type="evidence" value="ECO:0007669"/>
    <property type="project" value="TreeGrafter"/>
</dbReference>
<dbReference type="GO" id="GO:0000287">
    <property type="term" value="F:magnesium ion binding"/>
    <property type="evidence" value="ECO:0007669"/>
    <property type="project" value="UniProtKB-UniRule"/>
</dbReference>
<dbReference type="GO" id="GO:0030145">
    <property type="term" value="F:manganese ion binding"/>
    <property type="evidence" value="ECO:0007669"/>
    <property type="project" value="UniProtKB-UniRule"/>
</dbReference>
<dbReference type="GO" id="GO:0000210">
    <property type="term" value="F:NAD+ diphosphatase activity"/>
    <property type="evidence" value="ECO:0007669"/>
    <property type="project" value="UniProtKB-UniRule"/>
</dbReference>
<dbReference type="GO" id="GO:0035529">
    <property type="term" value="F:NADH pyrophosphatase activity"/>
    <property type="evidence" value="ECO:0007669"/>
    <property type="project" value="TreeGrafter"/>
</dbReference>
<dbReference type="GO" id="GO:0110153">
    <property type="term" value="F:RNA NAD-cap (NMN-forming) hydrolase activity"/>
    <property type="evidence" value="ECO:0007669"/>
    <property type="project" value="RHEA"/>
</dbReference>
<dbReference type="GO" id="GO:0008270">
    <property type="term" value="F:zinc ion binding"/>
    <property type="evidence" value="ECO:0007669"/>
    <property type="project" value="UniProtKB-UniRule"/>
</dbReference>
<dbReference type="GO" id="GO:0019677">
    <property type="term" value="P:NAD catabolic process"/>
    <property type="evidence" value="ECO:0007669"/>
    <property type="project" value="TreeGrafter"/>
</dbReference>
<dbReference type="GO" id="GO:0006734">
    <property type="term" value="P:NADH metabolic process"/>
    <property type="evidence" value="ECO:0007669"/>
    <property type="project" value="TreeGrafter"/>
</dbReference>
<dbReference type="GO" id="GO:0006742">
    <property type="term" value="P:NADP catabolic process"/>
    <property type="evidence" value="ECO:0007669"/>
    <property type="project" value="TreeGrafter"/>
</dbReference>
<dbReference type="CDD" id="cd03429">
    <property type="entry name" value="NUDIX_NADH_pyrophosphatase_Nudt13"/>
    <property type="match status" value="1"/>
</dbReference>
<dbReference type="FunFam" id="3.90.79.10:FF:000004">
    <property type="entry name" value="NADH pyrophosphatase"/>
    <property type="match status" value="1"/>
</dbReference>
<dbReference type="Gene3D" id="3.90.79.20">
    <property type="match status" value="1"/>
</dbReference>
<dbReference type="Gene3D" id="3.90.79.10">
    <property type="entry name" value="Nucleoside Triphosphate Pyrophosphohydrolase"/>
    <property type="match status" value="1"/>
</dbReference>
<dbReference type="HAMAP" id="MF_00297">
    <property type="entry name" value="Nudix_NudC"/>
    <property type="match status" value="1"/>
</dbReference>
<dbReference type="InterPro" id="IPR050241">
    <property type="entry name" value="NAD-cap_RNA_hydrolase_NudC"/>
</dbReference>
<dbReference type="InterPro" id="IPR049734">
    <property type="entry name" value="NudC-like_C"/>
</dbReference>
<dbReference type="InterPro" id="IPR015797">
    <property type="entry name" value="NUDIX_hydrolase-like_dom_sf"/>
</dbReference>
<dbReference type="InterPro" id="IPR020084">
    <property type="entry name" value="NUDIX_hydrolase_CS"/>
</dbReference>
<dbReference type="InterPro" id="IPR000086">
    <property type="entry name" value="NUDIX_hydrolase_dom"/>
</dbReference>
<dbReference type="InterPro" id="IPR022925">
    <property type="entry name" value="RNA_Hydrolase_NudC"/>
</dbReference>
<dbReference type="InterPro" id="IPR015376">
    <property type="entry name" value="Znr_NADH_PPase"/>
</dbReference>
<dbReference type="NCBIfam" id="NF001299">
    <property type="entry name" value="PRK00241.1"/>
    <property type="match status" value="1"/>
</dbReference>
<dbReference type="PANTHER" id="PTHR42904:SF6">
    <property type="entry name" value="NAD-CAPPED RNA HYDROLASE NUDT12"/>
    <property type="match status" value="1"/>
</dbReference>
<dbReference type="PANTHER" id="PTHR42904">
    <property type="entry name" value="NUDIX HYDROLASE, NUDC SUBFAMILY"/>
    <property type="match status" value="1"/>
</dbReference>
<dbReference type="Pfam" id="PF00293">
    <property type="entry name" value="NUDIX"/>
    <property type="match status" value="1"/>
</dbReference>
<dbReference type="Pfam" id="PF09297">
    <property type="entry name" value="Zn_ribbon_NUD"/>
    <property type="match status" value="1"/>
</dbReference>
<dbReference type="SUPFAM" id="SSF55811">
    <property type="entry name" value="Nudix"/>
    <property type="match status" value="2"/>
</dbReference>
<dbReference type="PROSITE" id="PS51462">
    <property type="entry name" value="NUDIX"/>
    <property type="match status" value="1"/>
</dbReference>
<dbReference type="PROSITE" id="PS00893">
    <property type="entry name" value="NUDIX_BOX"/>
    <property type="match status" value="1"/>
</dbReference>
<keyword id="KW-0378">Hydrolase</keyword>
<keyword id="KW-0460">Magnesium</keyword>
<keyword id="KW-0464">Manganese</keyword>
<keyword id="KW-0479">Metal-binding</keyword>
<keyword id="KW-0520">NAD</keyword>
<keyword id="KW-0862">Zinc</keyword>
<name>NUDC_HAEI8</name>